<accession>Q49SQ1</accession>
<keyword id="KW-1003">Cell membrane</keyword>
<keyword id="KW-1015">Disulfide bond</keyword>
<keyword id="KW-0297">G-protein coupled receptor</keyword>
<keyword id="KW-0325">Glycoprotein</keyword>
<keyword id="KW-0472">Membrane</keyword>
<keyword id="KW-0675">Receptor</keyword>
<keyword id="KW-1185">Reference proteome</keyword>
<keyword id="KW-0807">Transducer</keyword>
<keyword id="KW-0812">Transmembrane</keyword>
<keyword id="KW-1133">Transmembrane helix</keyword>
<comment type="function">
    <text>Orphan receptor; could be a chemoattractant receptor.</text>
</comment>
<comment type="subcellular location">
    <subcellularLocation>
        <location>Cell membrane</location>
        <topology>Multi-pass membrane protein</topology>
    </subcellularLocation>
</comment>
<comment type="tissue specificity">
    <text evidence="4">Expressed in spleen, lung, heart, liver, kidney, pancreas, thymus, gonads and leukocytes.</text>
</comment>
<comment type="polymorphism">
    <text evidence="4">The sequence shown in this entry differs from the translation of the reference genome assembly (GRCh38/hg38) due to a nonsense variant creating stop codon at position 140 in the reference genome. The sequence shown in this entry is that of variant p.Ter140Arg. This variant has a frequency of about 1% in the human population according to the Genome Aggregation Database (gnomAD v3.1.2). Polymorphic GPR33 gene inactivation has been observed in hominoids, including chimpanzees, as well as in some rodents, such as rat, but not in other mammals. A likely cause of GPR33 inactivation by selection is its interplay with an exogenous factor, such as a rodent-hominoidotopic pathogen.</text>
</comment>
<comment type="similarity">
    <text evidence="2">Belongs to the G-protein coupled receptor 1 family.</text>
</comment>
<comment type="caution">
    <text evidence="5">The sequence shown in this entry differs from the translation of the reference genome assembly (GRCh38/hg38) due to a nonsense variant creating stop codon at position 140 in the reference genome.</text>
</comment>
<sequence>MDLINSTDYLINASTLVRNSTQFLAPASKMIIALSLYISSIIGTITNGLYLWVLRFKMKQTVNTLLFFHLILSYFISTMILPFMATSQLQDNHWNFGTALCKVFNGTLSLGMFTSVFFLSAIGLDRYLLTLHPVWSQQHRTPRWASSIVLGVWISAAALSIPYLIFRETHHDRKGKVTCQNNYAVSTNWESKEMQASRQWIHVACFISRFLLGFLLPFFIIIFCYERVASKVKERSLFKSSKPFKVMMTAIISFFVCWMPYHIHQGLLLTTNQSLLLELTLILTVLTTSFNTIFSPTLYLFVGENFKKVFKKSILALFESTFSEDSSVERTQT</sequence>
<organism>
    <name type="scientific">Homo sapiens</name>
    <name type="common">Human</name>
    <dbReference type="NCBI Taxonomy" id="9606"/>
    <lineage>
        <taxon>Eukaryota</taxon>
        <taxon>Metazoa</taxon>
        <taxon>Chordata</taxon>
        <taxon>Craniata</taxon>
        <taxon>Vertebrata</taxon>
        <taxon>Euteleostomi</taxon>
        <taxon>Mammalia</taxon>
        <taxon>Eutheria</taxon>
        <taxon>Euarchontoglires</taxon>
        <taxon>Primates</taxon>
        <taxon>Haplorrhini</taxon>
        <taxon>Catarrhini</taxon>
        <taxon>Hominidae</taxon>
        <taxon>Homo</taxon>
    </lineage>
</organism>
<evidence type="ECO:0000255" key="1"/>
<evidence type="ECO:0000255" key="2">
    <source>
        <dbReference type="PROSITE-ProRule" id="PRU00521"/>
    </source>
</evidence>
<evidence type="ECO:0000269" key="3">
    <source>
    </source>
</evidence>
<evidence type="ECO:0000269" key="4">
    <source>
    </source>
</evidence>
<evidence type="ECO:0000305" key="5"/>
<feature type="chain" id="PRO_0000069553" description="Probable G-protein coupled receptor 33">
    <location>
        <begin position="1"/>
        <end position="333"/>
    </location>
</feature>
<feature type="topological domain" description="Extracellular" evidence="1">
    <location>
        <begin position="1"/>
        <end position="30"/>
    </location>
</feature>
<feature type="transmembrane region" description="Helical; Name=1" evidence="1">
    <location>
        <begin position="31"/>
        <end position="53"/>
    </location>
</feature>
<feature type="topological domain" description="Cytoplasmic" evidence="1">
    <location>
        <begin position="54"/>
        <end position="64"/>
    </location>
</feature>
<feature type="transmembrane region" description="Helical; Name=2" evidence="1">
    <location>
        <begin position="65"/>
        <end position="86"/>
    </location>
</feature>
<feature type="topological domain" description="Extracellular" evidence="1">
    <location>
        <begin position="87"/>
        <end position="103"/>
    </location>
</feature>
<feature type="transmembrane region" description="Helical; Name=3" evidence="1">
    <location>
        <begin position="104"/>
        <end position="124"/>
    </location>
</feature>
<feature type="topological domain" description="Cytoplasmic" evidence="1">
    <location>
        <begin position="125"/>
        <end position="143"/>
    </location>
</feature>
<feature type="transmembrane region" description="Helical; Name=4" evidence="1">
    <location>
        <begin position="144"/>
        <end position="165"/>
    </location>
</feature>
<feature type="topological domain" description="Extracellular" evidence="1">
    <location>
        <begin position="166"/>
        <end position="209"/>
    </location>
</feature>
<feature type="transmembrane region" description="Helical; Name=5" evidence="1">
    <location>
        <begin position="210"/>
        <end position="230"/>
    </location>
</feature>
<feature type="topological domain" description="Cytoplasmic" evidence="1">
    <location>
        <begin position="231"/>
        <end position="246"/>
    </location>
</feature>
<feature type="transmembrane region" description="Helical; Name=6" evidence="1">
    <location>
        <begin position="247"/>
        <end position="268"/>
    </location>
</feature>
<feature type="topological domain" description="Extracellular" evidence="1">
    <location>
        <begin position="269"/>
        <end position="283"/>
    </location>
</feature>
<feature type="transmembrane region" description="Helical; Name=7" evidence="1">
    <location>
        <begin position="284"/>
        <end position="303"/>
    </location>
</feature>
<feature type="topological domain" description="Cytoplasmic" evidence="1">
    <location>
        <begin position="304"/>
        <end position="333"/>
    </location>
</feature>
<feature type="glycosylation site" description="N-linked (GlcNAc...) asparagine" evidence="1">
    <location>
        <position position="5"/>
    </location>
</feature>
<feature type="glycosylation site" description="N-linked (GlcNAc...) asparagine" evidence="1">
    <location>
        <position position="12"/>
    </location>
</feature>
<feature type="glycosylation site" description="N-linked (GlcNAc...) asparagine" evidence="1">
    <location>
        <position position="19"/>
    </location>
</feature>
<feature type="glycosylation site" description="N-linked (GlcNAc...) asparagine" evidence="1">
    <location>
        <position position="272"/>
    </location>
</feature>
<feature type="disulfide bond" evidence="2">
    <location>
        <begin position="101"/>
        <end position="179"/>
    </location>
</feature>
<feature type="sequence variant" id="VAR_088064" description="In dbSNP:rs17097921." evidence="3">
    <location>
        <begin position="140"/>
        <end position="333"/>
    </location>
</feature>
<protein>
    <recommendedName>
        <fullName>Probable G-protein coupled receptor 33</fullName>
    </recommendedName>
</protein>
<gene>
    <name type="primary">GPR33</name>
</gene>
<reference key="1">
    <citation type="journal article" date="2005" name="J. Biol. Chem.">
        <title>The rise and fall of the chemoattractant receptor GPR33.</title>
        <authorList>
            <person name="Roempler H."/>
            <person name="Schulz A."/>
            <person name="Pitra C."/>
            <person name="Coop G."/>
            <person name="Przeworski M."/>
            <person name="Paeaebo S."/>
            <person name="Schoeneberg T."/>
        </authorList>
    </citation>
    <scope>NUCLEOTIDE SEQUENCE [GENOMIC DNA]</scope>
    <scope>POLYMORPHISM</scope>
    <scope>TISSUE SPECIFICITY</scope>
</reference>
<reference key="2">
    <citation type="journal article" date="2003" name="Nature">
        <title>The DNA sequence and analysis of human chromosome 14.</title>
        <authorList>
            <person name="Heilig R."/>
            <person name="Eckenberg R."/>
            <person name="Petit J.-L."/>
            <person name="Fonknechten N."/>
            <person name="Da Silva C."/>
            <person name="Cattolico L."/>
            <person name="Levy M."/>
            <person name="Barbe V."/>
            <person name="De Berardinis V."/>
            <person name="Ureta-Vidal A."/>
            <person name="Pelletier E."/>
            <person name="Vico V."/>
            <person name="Anthouard V."/>
            <person name="Rowen L."/>
            <person name="Madan A."/>
            <person name="Qin S."/>
            <person name="Sun H."/>
            <person name="Du H."/>
            <person name="Pepin K."/>
            <person name="Artiguenave F."/>
            <person name="Robert C."/>
            <person name="Cruaud C."/>
            <person name="Bruels T."/>
            <person name="Jaillon O."/>
            <person name="Friedlander L."/>
            <person name="Samson G."/>
            <person name="Brottier P."/>
            <person name="Cure S."/>
            <person name="Segurens B."/>
            <person name="Aniere F."/>
            <person name="Samain S."/>
            <person name="Crespeau H."/>
            <person name="Abbasi N."/>
            <person name="Aiach N."/>
            <person name="Boscus D."/>
            <person name="Dickhoff R."/>
            <person name="Dors M."/>
            <person name="Dubois I."/>
            <person name="Friedman C."/>
            <person name="Gouyvenoux M."/>
            <person name="James R."/>
            <person name="Madan A."/>
            <person name="Mairey-Estrada B."/>
            <person name="Mangenot S."/>
            <person name="Martins N."/>
            <person name="Menard M."/>
            <person name="Oztas S."/>
            <person name="Ratcliffe A."/>
            <person name="Shaffer T."/>
            <person name="Trask B."/>
            <person name="Vacherie B."/>
            <person name="Bellemere C."/>
            <person name="Belser C."/>
            <person name="Besnard-Gonnet M."/>
            <person name="Bartol-Mavel D."/>
            <person name="Boutard M."/>
            <person name="Briez-Silla S."/>
            <person name="Combette S."/>
            <person name="Dufosse-Laurent V."/>
            <person name="Ferron C."/>
            <person name="Lechaplais C."/>
            <person name="Louesse C."/>
            <person name="Muselet D."/>
            <person name="Magdelenat G."/>
            <person name="Pateau E."/>
            <person name="Petit E."/>
            <person name="Sirvain-Trukniewicz P."/>
            <person name="Trybou A."/>
            <person name="Vega-Czarny N."/>
            <person name="Bataille E."/>
            <person name="Bluet E."/>
            <person name="Bordelais I."/>
            <person name="Dubois M."/>
            <person name="Dumont C."/>
            <person name="Guerin T."/>
            <person name="Haffray S."/>
            <person name="Hammadi R."/>
            <person name="Muanga J."/>
            <person name="Pellouin V."/>
            <person name="Robert D."/>
            <person name="Wunderle E."/>
            <person name="Gauguet G."/>
            <person name="Roy A."/>
            <person name="Sainte-Marthe L."/>
            <person name="Verdier J."/>
            <person name="Verdier-Discala C."/>
            <person name="Hillier L.W."/>
            <person name="Fulton L."/>
            <person name="McPherson J."/>
            <person name="Matsuda F."/>
            <person name="Wilson R."/>
            <person name="Scarpelli C."/>
            <person name="Gyapay G."/>
            <person name="Wincker P."/>
            <person name="Saurin W."/>
            <person name="Quetier F."/>
            <person name="Waterston R."/>
            <person name="Hood L."/>
            <person name="Weissenbach J."/>
        </authorList>
    </citation>
    <scope>NUCLEOTIDE SEQUENCE [LARGE SCALE GENOMIC DNA]</scope>
    <scope>VARIANT 140-ARG--THR-333 DEL</scope>
</reference>
<dbReference type="EMBL" id="AY494000">
    <property type="protein sequence ID" value="AAR98754.1"/>
    <property type="molecule type" value="Genomic_DNA"/>
</dbReference>
<dbReference type="EMBL" id="AL163973">
    <property type="status" value="NOT_ANNOTATED_CDS"/>
    <property type="molecule type" value="Genomic_DNA"/>
</dbReference>
<dbReference type="CCDS" id="CCDS73628.1"/>
<dbReference type="RefSeq" id="NP_001184113.2">
    <property type="nucleotide sequence ID" value="NM_001197184.3"/>
</dbReference>
<dbReference type="SMR" id="Q49SQ1"/>
<dbReference type="FunCoup" id="Q49SQ1">
    <property type="interactions" value="334"/>
</dbReference>
<dbReference type="STRING" id="9606.ENSP00000421557"/>
<dbReference type="GlyCosmos" id="Q49SQ1">
    <property type="glycosylation" value="4 sites, No reported glycans"/>
</dbReference>
<dbReference type="GlyGen" id="Q49SQ1">
    <property type="glycosylation" value="4 sites"/>
</dbReference>
<dbReference type="iPTMnet" id="Q49SQ1"/>
<dbReference type="PhosphoSitePlus" id="Q49SQ1"/>
<dbReference type="BioMuta" id="GPR33"/>
<dbReference type="DMDM" id="82592890"/>
<dbReference type="PaxDb" id="9606-ENSP00000421557"/>
<dbReference type="Antibodypedia" id="78028">
    <property type="antibodies" value="11 antibodies from 8 providers"/>
</dbReference>
<dbReference type="DNASU" id="2856"/>
<dbReference type="Ensembl" id="ENST00000399285.5">
    <property type="protein sequence ID" value="ENSP00000421557.1"/>
    <property type="gene ID" value="ENSG00000214943.5"/>
</dbReference>
<dbReference type="GeneID" id="2856"/>
<dbReference type="KEGG" id="hsa:2856"/>
<dbReference type="MANE-Select" id="ENST00000399285.5">
    <property type="protein sequence ID" value="ENSP00000421557.1"/>
    <property type="RefSeq nucleotide sequence ID" value="NM_001197184.3"/>
    <property type="RefSeq protein sequence ID" value="NP_001184113.2"/>
</dbReference>
<dbReference type="UCSC" id="uc021rsa.3">
    <property type="organism name" value="human"/>
</dbReference>
<dbReference type="AGR" id="HGNC:4489"/>
<dbReference type="CTD" id="2856"/>
<dbReference type="DisGeNET" id="2856"/>
<dbReference type="GeneCards" id="GPR33"/>
<dbReference type="HGNC" id="HGNC:4489">
    <property type="gene designation" value="GPR33"/>
</dbReference>
<dbReference type="HPA" id="ENSG00000214943">
    <property type="expression patterns" value="Not detected"/>
</dbReference>
<dbReference type="MIM" id="610118">
    <property type="type" value="gene"/>
</dbReference>
<dbReference type="neXtProt" id="NX_Q49SQ1"/>
<dbReference type="VEuPathDB" id="HostDB:ENSG00000214943"/>
<dbReference type="eggNOG" id="KOG3656">
    <property type="taxonomic scope" value="Eukaryota"/>
</dbReference>
<dbReference type="GeneTree" id="ENSGT01020000230438"/>
<dbReference type="HOGENOM" id="CLU_009579_8_0_1"/>
<dbReference type="InParanoid" id="Q49SQ1"/>
<dbReference type="OMA" id="QHRTPRW"/>
<dbReference type="OrthoDB" id="6117944at2759"/>
<dbReference type="PAN-GO" id="Q49SQ1">
    <property type="GO annotations" value="7 GO annotations based on evolutionary models"/>
</dbReference>
<dbReference type="PhylomeDB" id="Q49SQ1"/>
<dbReference type="PathwayCommons" id="Q49SQ1"/>
<dbReference type="BioGRID-ORCS" id="2856">
    <property type="hits" value="7 hits in 273 CRISPR screens"/>
</dbReference>
<dbReference type="GeneWiki" id="GPR33"/>
<dbReference type="GenomeRNAi" id="2856"/>
<dbReference type="Pharos" id="Q49SQ1">
    <property type="development level" value="Tdark"/>
</dbReference>
<dbReference type="PRO" id="PR:Q49SQ1"/>
<dbReference type="Proteomes" id="UP000005640">
    <property type="component" value="Chromosome 14"/>
</dbReference>
<dbReference type="RNAct" id="Q49SQ1">
    <property type="molecule type" value="protein"/>
</dbReference>
<dbReference type="Bgee" id="ENSG00000214943">
    <property type="expression patterns" value="Expressed in duodenum and 8 other cell types or tissues"/>
</dbReference>
<dbReference type="GO" id="GO:0005886">
    <property type="term" value="C:plasma membrane"/>
    <property type="evidence" value="ECO:0000318"/>
    <property type="project" value="GO_Central"/>
</dbReference>
<dbReference type="GO" id="GO:0004875">
    <property type="term" value="F:complement receptor activity"/>
    <property type="evidence" value="ECO:0000318"/>
    <property type="project" value="GO_Central"/>
</dbReference>
<dbReference type="GO" id="GO:0004930">
    <property type="term" value="F:G protein-coupled receptor activity"/>
    <property type="evidence" value="ECO:0000318"/>
    <property type="project" value="GO_Central"/>
</dbReference>
<dbReference type="GO" id="GO:0002430">
    <property type="term" value="P:complement receptor mediated signaling pathway"/>
    <property type="evidence" value="ECO:0000318"/>
    <property type="project" value="GO_Central"/>
</dbReference>
<dbReference type="GO" id="GO:0006954">
    <property type="term" value="P:inflammatory response"/>
    <property type="evidence" value="ECO:0000318"/>
    <property type="project" value="GO_Central"/>
</dbReference>
<dbReference type="GO" id="GO:0007200">
    <property type="term" value="P:phospholipase C-activating G protein-coupled receptor signaling pathway"/>
    <property type="evidence" value="ECO:0000318"/>
    <property type="project" value="GO_Central"/>
</dbReference>
<dbReference type="GO" id="GO:0007204">
    <property type="term" value="P:positive regulation of cytosolic calcium ion concentration"/>
    <property type="evidence" value="ECO:0000318"/>
    <property type="project" value="GO_Central"/>
</dbReference>
<dbReference type="CDD" id="cd15120">
    <property type="entry name" value="7tmA_GPR33"/>
    <property type="match status" value="1"/>
</dbReference>
<dbReference type="FunFam" id="1.20.1070.10:FF:000034">
    <property type="entry name" value="G-protein coupled receptor 1"/>
    <property type="match status" value="1"/>
</dbReference>
<dbReference type="Gene3D" id="1.20.1070.10">
    <property type="entry name" value="Rhodopsin 7-helix transmembrane proteins"/>
    <property type="match status" value="1"/>
</dbReference>
<dbReference type="InterPro" id="IPR000826">
    <property type="entry name" value="Formyl_rcpt-rel"/>
</dbReference>
<dbReference type="InterPro" id="IPR000276">
    <property type="entry name" value="GPCR_Rhodpsn"/>
</dbReference>
<dbReference type="InterPro" id="IPR017452">
    <property type="entry name" value="GPCR_Rhodpsn_7TM"/>
</dbReference>
<dbReference type="PANTHER" id="PTHR24225">
    <property type="entry name" value="CHEMOTACTIC RECEPTOR"/>
    <property type="match status" value="1"/>
</dbReference>
<dbReference type="PANTHER" id="PTHR24225:SF5">
    <property type="entry name" value="G-PROTEIN COUPLED RECEPTOR 33-RELATED"/>
    <property type="match status" value="1"/>
</dbReference>
<dbReference type="Pfam" id="PF00001">
    <property type="entry name" value="7tm_1"/>
    <property type="match status" value="1"/>
</dbReference>
<dbReference type="PRINTS" id="PR00526">
    <property type="entry name" value="FMETLEUPHER"/>
</dbReference>
<dbReference type="PRINTS" id="PR00237">
    <property type="entry name" value="GPCRRHODOPSN"/>
</dbReference>
<dbReference type="SUPFAM" id="SSF81321">
    <property type="entry name" value="Family A G protein-coupled receptor-like"/>
    <property type="match status" value="1"/>
</dbReference>
<dbReference type="PROSITE" id="PS50262">
    <property type="entry name" value="G_PROTEIN_RECEP_F1_2"/>
    <property type="match status" value="1"/>
</dbReference>
<name>GPR33_HUMAN</name>
<proteinExistence type="evidence at transcript level"/>